<evidence type="ECO:0000269" key="1">
    <source>
    </source>
</evidence>
<comment type="function">
    <text evidence="1">Component of SCF(EBF1) E3 ubiquitin ligase complexes, which may mediate the ubiquitination and subsequent proteasomal degradation of target proteins (probably including EIN3 and EIL1). Regulator of the ethylene signaling cascade by modulating the stability of EIN3 and EIL1 proteins.</text>
</comment>
<comment type="pathway">
    <text>Protein modification; protein ubiquitination.</text>
</comment>
<comment type="subunit">
    <text evidence="1">Part of a SCF (SKP1-cullin-F-box) protein ligase complex. Interacts with CUL1, SKP1A/ASK1, SKP1B/ASK2, EIN3, and EIL1.</text>
</comment>
<comment type="interaction">
    <interactant intactId="EBI-593623">
        <id>Q708Y0</id>
    </interactant>
    <interactant intactId="EBI-593576">
        <id>O24606</id>
        <label>EIN3</label>
    </interactant>
    <organismsDiffer>false</organismsDiffer>
    <experiments>3</experiments>
</comment>
<comment type="interaction">
    <interactant intactId="EBI-593623">
        <id>Q708Y0</id>
    </interactant>
    <interactant intactId="EBI-401164">
        <id>P43291</id>
        <label>SRK2A</label>
    </interactant>
    <organismsDiffer>false</organismsDiffer>
    <experiments>2</experiments>
</comment>
<comment type="subcellular location">
    <subcellularLocation>
        <location evidence="1">Nucleus</location>
    </subcellularLocation>
</comment>
<comment type="tissue specificity">
    <text evidence="1">Ubiquitous.</text>
</comment>
<comment type="induction">
    <text evidence="1">EIN3-dependent induction by ethylene.</text>
</comment>
<organism>
    <name type="scientific">Arabidopsis thaliana</name>
    <name type="common">Mouse-ear cress</name>
    <dbReference type="NCBI Taxonomy" id="3702"/>
    <lineage>
        <taxon>Eukaryota</taxon>
        <taxon>Viridiplantae</taxon>
        <taxon>Streptophyta</taxon>
        <taxon>Embryophyta</taxon>
        <taxon>Tracheophyta</taxon>
        <taxon>Spermatophyta</taxon>
        <taxon>Magnoliopsida</taxon>
        <taxon>eudicotyledons</taxon>
        <taxon>Gunneridae</taxon>
        <taxon>Pentapetalae</taxon>
        <taxon>rosids</taxon>
        <taxon>malvids</taxon>
        <taxon>Brassicales</taxon>
        <taxon>Brassicaceae</taxon>
        <taxon>Camelineae</taxon>
        <taxon>Arabidopsis</taxon>
    </lineage>
</organism>
<keyword id="KW-0936">Ethylene signaling pathway</keyword>
<keyword id="KW-0433">Leucine-rich repeat</keyword>
<keyword id="KW-0539">Nucleus</keyword>
<keyword id="KW-1185">Reference proteome</keyword>
<keyword id="KW-0677">Repeat</keyword>
<keyword id="KW-0833">Ubl conjugation pathway</keyword>
<feature type="chain" id="PRO_0000272246" description="EIN3-binding F-box protein 2">
    <location>
        <begin position="1"/>
        <end position="623"/>
    </location>
</feature>
<feature type="domain" description="F-box">
    <location>
        <begin position="52"/>
        <end position="106"/>
    </location>
</feature>
<feature type="repeat" description="LRR 1">
    <location>
        <begin position="119"/>
        <end position="147"/>
    </location>
</feature>
<feature type="repeat" description="LRR 2">
    <location>
        <begin position="151"/>
        <end position="176"/>
    </location>
</feature>
<feature type="repeat" description="LRR 3">
    <location>
        <begin position="177"/>
        <end position="202"/>
    </location>
</feature>
<feature type="repeat" description="LRR 4">
    <location>
        <begin position="203"/>
        <end position="228"/>
    </location>
</feature>
<feature type="repeat" description="LRR 5">
    <location>
        <begin position="229"/>
        <end position="254"/>
    </location>
</feature>
<feature type="repeat" description="LRR 6">
    <location>
        <begin position="255"/>
        <end position="281"/>
    </location>
</feature>
<feature type="repeat" description="LRR 7">
    <location>
        <begin position="307"/>
        <end position="334"/>
    </location>
</feature>
<feature type="repeat" description="LRR 8">
    <location>
        <begin position="335"/>
        <end position="360"/>
    </location>
</feature>
<feature type="repeat" description="LRR 9">
    <location>
        <begin position="361"/>
        <end position="386"/>
    </location>
</feature>
<feature type="repeat" description="LRR 10">
    <location>
        <begin position="387"/>
        <end position="413"/>
    </location>
</feature>
<feature type="repeat" description="LRR 11">
    <location>
        <begin position="414"/>
        <end position="441"/>
    </location>
</feature>
<feature type="repeat" description="LRR 12">
    <location>
        <begin position="442"/>
        <end position="467"/>
    </location>
</feature>
<feature type="repeat" description="LRR 13">
    <location>
        <begin position="468"/>
        <end position="494"/>
    </location>
</feature>
<feature type="repeat" description="LRR 14">
    <location>
        <begin position="495"/>
        <end position="521"/>
    </location>
</feature>
<feature type="repeat" description="LRR 15">
    <location>
        <begin position="522"/>
        <end position="547"/>
    </location>
</feature>
<feature type="repeat" description="LRR 16">
    <location>
        <begin position="548"/>
        <end position="574"/>
    </location>
</feature>
<feature type="repeat" description="LRR 17">
    <location>
        <begin position="575"/>
        <end position="600"/>
    </location>
</feature>
<feature type="repeat" description="LRR 18">
    <location>
        <begin position="601"/>
        <end position="623"/>
    </location>
</feature>
<protein>
    <recommendedName>
        <fullName>EIN3-binding F-box protein 2</fullName>
    </recommendedName>
</protein>
<proteinExistence type="evidence at protein level"/>
<sequence length="623" mass="66061">MSGIFRFSGDEDCLLGGSMYLSPGSCPGVYYPARKRLRVAATSFYSGFEEKQTSIDVLPEECLFEILRRLPSGQERSACACVSKHWLNLLSSISRSEVNESSVQDVEEGEGFLSRSLEGKKATDLRLAAIAVGTSSRGGLGKLQIRGSGFESKVTDVGLGAVAHGCPSLRIVSLWNLPAVSDLGLSEIARSCPMIEKLDLSRCPGITDSGLVAIAENCVNLSDLTIDSCSGVGNEGLRAIARRCVNLRSISIRSCPRIGDQGVAFLLAQAGSYLTKVKLQMLNVSGLSLAVIGHYGAAVTDLVLHGLQGVNEKGFWVMGNAKGLKKLKSLSVMSCRGMTDVGLEAVGNGCPDLKHVSLNKCLLVSGKGLVALAKSALSLESLKLEECHRINQFGLMGFLMNCGSKLKAFSLANCLGISDFNSESSLPSPSCSSLRSLSIRCCPGFGDASLAFLGKFCHQLQDVELCGLNGVTDAGVRELLQSNNVGLVKVNLSECINVSDNTVSAISVCHGRTLESLNLDGCKNITNASLVAVAKNCYSVNDLDISNTLVSDHGIKALASSPNHLNLQVLSIGGCSSITDKSKACIQKLGRTLLGLNIQRCGRISSSTVDTLLENLWRCDILY</sequence>
<reference key="1">
    <citation type="journal article" date="2003" name="Cell">
        <title>EIN3-dependent regulation of plant ethylene hormone signaling by two Arabidopsis F box proteins: EBF1 and EBF2.</title>
        <authorList>
            <person name="Potuschak T."/>
            <person name="Lechner E."/>
            <person name="Parmentier Y."/>
            <person name="Yanagisawa S."/>
            <person name="Grava S."/>
            <person name="Koncz C."/>
            <person name="Genschik P."/>
        </authorList>
    </citation>
    <scope>NUCLEOTIDE SEQUENCE [GENOMIC DNA / MRNA]</scope>
    <scope>FUNCTION</scope>
    <scope>INDUCTION</scope>
    <scope>TISSUE SPECIFICITY</scope>
    <scope>SUBCELLULAR LOCATION</scope>
    <scope>INTERACTION WITH CUL1; SKP1A/ASK1; SKP1B/ASK2; EIN3 AND EIL1</scope>
</reference>
<reference key="2">
    <citation type="journal article" date="2000" name="Nature">
        <title>Sequence and analysis of chromosome 5 of the plant Arabidopsis thaliana.</title>
        <authorList>
            <person name="Tabata S."/>
            <person name="Kaneko T."/>
            <person name="Nakamura Y."/>
            <person name="Kotani H."/>
            <person name="Kato T."/>
            <person name="Asamizu E."/>
            <person name="Miyajima N."/>
            <person name="Sasamoto S."/>
            <person name="Kimura T."/>
            <person name="Hosouchi T."/>
            <person name="Kawashima K."/>
            <person name="Kohara M."/>
            <person name="Matsumoto M."/>
            <person name="Matsuno A."/>
            <person name="Muraki A."/>
            <person name="Nakayama S."/>
            <person name="Nakazaki N."/>
            <person name="Naruo K."/>
            <person name="Okumura S."/>
            <person name="Shinpo S."/>
            <person name="Takeuchi C."/>
            <person name="Wada T."/>
            <person name="Watanabe A."/>
            <person name="Yamada M."/>
            <person name="Yasuda M."/>
            <person name="Sato S."/>
            <person name="de la Bastide M."/>
            <person name="Huang E."/>
            <person name="Spiegel L."/>
            <person name="Gnoj L."/>
            <person name="O'Shaughnessy A."/>
            <person name="Preston R."/>
            <person name="Habermann K."/>
            <person name="Murray J."/>
            <person name="Johnson D."/>
            <person name="Rohlfing T."/>
            <person name="Nelson J."/>
            <person name="Stoneking T."/>
            <person name="Pepin K."/>
            <person name="Spieth J."/>
            <person name="Sekhon M."/>
            <person name="Armstrong J."/>
            <person name="Becker M."/>
            <person name="Belter E."/>
            <person name="Cordum H."/>
            <person name="Cordes M."/>
            <person name="Courtney L."/>
            <person name="Courtney W."/>
            <person name="Dante M."/>
            <person name="Du H."/>
            <person name="Edwards J."/>
            <person name="Fryman J."/>
            <person name="Haakensen B."/>
            <person name="Lamar E."/>
            <person name="Latreille P."/>
            <person name="Leonard S."/>
            <person name="Meyer R."/>
            <person name="Mulvaney E."/>
            <person name="Ozersky P."/>
            <person name="Riley A."/>
            <person name="Strowmatt C."/>
            <person name="Wagner-McPherson C."/>
            <person name="Wollam A."/>
            <person name="Yoakum M."/>
            <person name="Bell M."/>
            <person name="Dedhia N."/>
            <person name="Parnell L."/>
            <person name="Shah R."/>
            <person name="Rodriguez M."/>
            <person name="Hoon See L."/>
            <person name="Vil D."/>
            <person name="Baker J."/>
            <person name="Kirchoff K."/>
            <person name="Toth K."/>
            <person name="King L."/>
            <person name="Bahret A."/>
            <person name="Miller B."/>
            <person name="Marra M.A."/>
            <person name="Martienssen R."/>
            <person name="McCombie W.R."/>
            <person name="Wilson R.K."/>
            <person name="Murphy G."/>
            <person name="Bancroft I."/>
            <person name="Volckaert G."/>
            <person name="Wambutt R."/>
            <person name="Duesterhoeft A."/>
            <person name="Stiekema W."/>
            <person name="Pohl T."/>
            <person name="Entian K.-D."/>
            <person name="Terryn N."/>
            <person name="Hartley N."/>
            <person name="Bent E."/>
            <person name="Johnson S."/>
            <person name="Langham S.-A."/>
            <person name="McCullagh B."/>
            <person name="Robben J."/>
            <person name="Grymonprez B."/>
            <person name="Zimmermann W."/>
            <person name="Ramsperger U."/>
            <person name="Wedler H."/>
            <person name="Balke K."/>
            <person name="Wedler E."/>
            <person name="Peters S."/>
            <person name="van Staveren M."/>
            <person name="Dirkse W."/>
            <person name="Mooijman P."/>
            <person name="Klein Lankhorst R."/>
            <person name="Weitzenegger T."/>
            <person name="Bothe G."/>
            <person name="Rose M."/>
            <person name="Hauf J."/>
            <person name="Berneiser S."/>
            <person name="Hempel S."/>
            <person name="Feldpausch M."/>
            <person name="Lamberth S."/>
            <person name="Villarroel R."/>
            <person name="Gielen J."/>
            <person name="Ardiles W."/>
            <person name="Bents O."/>
            <person name="Lemcke K."/>
            <person name="Kolesov G."/>
            <person name="Mayer K.F.X."/>
            <person name="Rudd S."/>
            <person name="Schoof H."/>
            <person name="Schueller C."/>
            <person name="Zaccaria P."/>
            <person name="Mewes H.-W."/>
            <person name="Bevan M."/>
            <person name="Fransz P.F."/>
        </authorList>
    </citation>
    <scope>NUCLEOTIDE SEQUENCE [LARGE SCALE GENOMIC DNA]</scope>
    <source>
        <strain>cv. Columbia</strain>
    </source>
</reference>
<reference key="3">
    <citation type="journal article" date="2017" name="Plant J.">
        <title>Araport11: a complete reannotation of the Arabidopsis thaliana reference genome.</title>
        <authorList>
            <person name="Cheng C.Y."/>
            <person name="Krishnakumar V."/>
            <person name="Chan A.P."/>
            <person name="Thibaud-Nissen F."/>
            <person name="Schobel S."/>
            <person name="Town C.D."/>
        </authorList>
    </citation>
    <scope>GENOME REANNOTATION</scope>
    <source>
        <strain>cv. Columbia</strain>
    </source>
</reference>
<reference key="4">
    <citation type="submission" date="2006-07" db="EMBL/GenBank/DDBJ databases">
        <title>Large-scale analysis of RIKEN Arabidopsis full-length (RAFL) cDNAs.</title>
        <authorList>
            <person name="Totoki Y."/>
            <person name="Seki M."/>
            <person name="Ishida J."/>
            <person name="Nakajima M."/>
            <person name="Enju A."/>
            <person name="Kamiya A."/>
            <person name="Narusaka M."/>
            <person name="Shin-i T."/>
            <person name="Nakagawa M."/>
            <person name="Sakamoto N."/>
            <person name="Oishi K."/>
            <person name="Kohara Y."/>
            <person name="Kobayashi M."/>
            <person name="Toyoda A."/>
            <person name="Sakaki Y."/>
            <person name="Sakurai T."/>
            <person name="Iida K."/>
            <person name="Akiyama K."/>
            <person name="Satou M."/>
            <person name="Toyoda T."/>
            <person name="Konagaya A."/>
            <person name="Carninci P."/>
            <person name="Kawai J."/>
            <person name="Hayashizaki Y."/>
            <person name="Shinozaki K."/>
        </authorList>
    </citation>
    <scope>NUCLEOTIDE SEQUENCE [LARGE SCALE MRNA]</scope>
    <source>
        <strain>cv. Columbia</strain>
    </source>
</reference>
<dbReference type="EMBL" id="AJ609239">
    <property type="protein sequence ID" value="CAE75865.1"/>
    <property type="molecule type" value="Genomic_RNA"/>
</dbReference>
<dbReference type="EMBL" id="AY485830">
    <property type="protein sequence ID" value="AAR27072.1"/>
    <property type="molecule type" value="mRNA"/>
</dbReference>
<dbReference type="EMBL" id="AC006258">
    <property type="status" value="NOT_ANNOTATED_CDS"/>
    <property type="molecule type" value="Genomic_DNA"/>
</dbReference>
<dbReference type="EMBL" id="CP002688">
    <property type="protein sequence ID" value="AED93429.1"/>
    <property type="molecule type" value="Genomic_DNA"/>
</dbReference>
<dbReference type="EMBL" id="AK227858">
    <property type="protein sequence ID" value="BAE99835.1"/>
    <property type="molecule type" value="mRNA"/>
</dbReference>
<dbReference type="RefSeq" id="NP_197917.1">
    <property type="nucleotide sequence ID" value="NM_122444.4"/>
</dbReference>
<dbReference type="SMR" id="Q708Y0"/>
<dbReference type="BioGRID" id="17882">
    <property type="interactions" value="10"/>
</dbReference>
<dbReference type="FunCoup" id="Q708Y0">
    <property type="interactions" value="367"/>
</dbReference>
<dbReference type="IntAct" id="Q708Y0">
    <property type="interactions" value="6"/>
</dbReference>
<dbReference type="STRING" id="3702.Q708Y0"/>
<dbReference type="PaxDb" id="3702-AT5G25350.1"/>
<dbReference type="EnsemblPlants" id="AT5G25350.1">
    <property type="protein sequence ID" value="AT5G25350.1"/>
    <property type="gene ID" value="AT5G25350"/>
</dbReference>
<dbReference type="GeneID" id="832607"/>
<dbReference type="Gramene" id="AT5G25350.1">
    <property type="protein sequence ID" value="AT5G25350.1"/>
    <property type="gene ID" value="AT5G25350"/>
</dbReference>
<dbReference type="KEGG" id="ath:AT5G25350"/>
<dbReference type="Araport" id="AT5G25350"/>
<dbReference type="TAIR" id="AT5G25350">
    <property type="gene designation" value="EBF2"/>
</dbReference>
<dbReference type="eggNOG" id="KOG1947">
    <property type="taxonomic scope" value="Eukaryota"/>
</dbReference>
<dbReference type="HOGENOM" id="CLU_016072_2_0_1"/>
<dbReference type="InParanoid" id="Q708Y0"/>
<dbReference type="OMA" id="ECHRINQ"/>
<dbReference type="PhylomeDB" id="Q708Y0"/>
<dbReference type="UniPathway" id="UPA00143"/>
<dbReference type="PRO" id="PR:Q708Y0"/>
<dbReference type="Proteomes" id="UP000006548">
    <property type="component" value="Chromosome 5"/>
</dbReference>
<dbReference type="ExpressionAtlas" id="Q708Y0">
    <property type="expression patterns" value="baseline and differential"/>
</dbReference>
<dbReference type="GO" id="GO:0005634">
    <property type="term" value="C:nucleus"/>
    <property type="evidence" value="ECO:0000314"/>
    <property type="project" value="TAIR"/>
</dbReference>
<dbReference type="GO" id="GO:0019005">
    <property type="term" value="C:SCF ubiquitin ligase complex"/>
    <property type="evidence" value="ECO:0000353"/>
    <property type="project" value="TAIR"/>
</dbReference>
<dbReference type="GO" id="GO:0009873">
    <property type="term" value="P:ethylene-activated signaling pathway"/>
    <property type="evidence" value="ECO:0007669"/>
    <property type="project" value="UniProtKB-KW"/>
</dbReference>
<dbReference type="GO" id="GO:0010105">
    <property type="term" value="P:negative regulation of ethylene-activated signaling pathway"/>
    <property type="evidence" value="ECO:0000304"/>
    <property type="project" value="TAIR"/>
</dbReference>
<dbReference type="GO" id="GO:0016567">
    <property type="term" value="P:protein ubiquitination"/>
    <property type="evidence" value="ECO:0007669"/>
    <property type="project" value="UniProtKB-UniPathway"/>
</dbReference>
<dbReference type="GO" id="GO:0009723">
    <property type="term" value="P:response to ethylene"/>
    <property type="evidence" value="ECO:0000315"/>
    <property type="project" value="TAIR"/>
</dbReference>
<dbReference type="GO" id="GO:0006511">
    <property type="term" value="P:ubiquitin-dependent protein catabolic process"/>
    <property type="evidence" value="ECO:0000304"/>
    <property type="project" value="TAIR"/>
</dbReference>
<dbReference type="CDD" id="cd22159">
    <property type="entry name" value="F-box_AtTIR1-like"/>
    <property type="match status" value="1"/>
</dbReference>
<dbReference type="FunFam" id="3.80.10.10:FF:000451">
    <property type="entry name" value="EIN3-binding F-box protein 1"/>
    <property type="match status" value="1"/>
</dbReference>
<dbReference type="FunFam" id="3.80.10.10:FF:000473">
    <property type="entry name" value="EIN3-binding F-box protein 1"/>
    <property type="match status" value="1"/>
</dbReference>
<dbReference type="FunFam" id="3.80.10.10:FF:000595">
    <property type="entry name" value="EIN3-binding F-box protein 1"/>
    <property type="match status" value="1"/>
</dbReference>
<dbReference type="Gene3D" id="1.20.1280.50">
    <property type="match status" value="1"/>
</dbReference>
<dbReference type="Gene3D" id="3.80.10.10">
    <property type="entry name" value="Ribonuclease Inhibitor"/>
    <property type="match status" value="4"/>
</dbReference>
<dbReference type="InterPro" id="IPR036047">
    <property type="entry name" value="F-box-like_dom_sf"/>
</dbReference>
<dbReference type="InterPro" id="IPR001810">
    <property type="entry name" value="F-box_dom"/>
</dbReference>
<dbReference type="InterPro" id="IPR001611">
    <property type="entry name" value="Leu-rich_rpt"/>
</dbReference>
<dbReference type="InterPro" id="IPR006553">
    <property type="entry name" value="Leu-rich_rpt_Cys-con_subtyp"/>
</dbReference>
<dbReference type="InterPro" id="IPR032675">
    <property type="entry name" value="LRR_dom_sf"/>
</dbReference>
<dbReference type="PANTHER" id="PTHR13318:SF250">
    <property type="entry name" value="EIN3-BINDING F-BOX PROTEIN 2"/>
    <property type="match status" value="1"/>
</dbReference>
<dbReference type="PANTHER" id="PTHR13318">
    <property type="entry name" value="PARTNER OF PAIRED, ISOFORM B-RELATED"/>
    <property type="match status" value="1"/>
</dbReference>
<dbReference type="Pfam" id="PF00646">
    <property type="entry name" value="F-box"/>
    <property type="match status" value="1"/>
</dbReference>
<dbReference type="Pfam" id="PF13516">
    <property type="entry name" value="LRR_6"/>
    <property type="match status" value="3"/>
</dbReference>
<dbReference type="SMART" id="SM00256">
    <property type="entry name" value="FBOX"/>
    <property type="match status" value="1"/>
</dbReference>
<dbReference type="SMART" id="SM00367">
    <property type="entry name" value="LRR_CC"/>
    <property type="match status" value="13"/>
</dbReference>
<dbReference type="SUPFAM" id="SSF81383">
    <property type="entry name" value="F-box domain"/>
    <property type="match status" value="1"/>
</dbReference>
<dbReference type="SUPFAM" id="SSF52047">
    <property type="entry name" value="RNI-like"/>
    <property type="match status" value="2"/>
</dbReference>
<gene>
    <name type="primary">EBF2</name>
    <name type="ordered locus">At5g25350</name>
    <name type="ORF">F18G18.90</name>
</gene>
<accession>Q708Y0</accession>
<name>EBF2_ARATH</name>